<reference evidence="4" key="1">
    <citation type="journal article" date="2005" name="Plant Dis.">
        <title>Association of a virus with wheat displaying yellow head disease symptoms in the Great Plains.</title>
        <authorList>
            <person name="Seifers D.L."/>
            <person name="Harvey T.L."/>
            <person name="Martin T.J."/>
            <person name="Haber S."/>
            <person name="She Y.-M."/>
            <person name="Ens W."/>
            <person name="Standing K.G."/>
            <person name="Salomon R."/>
            <person name="Gera A."/>
        </authorList>
        <dbReference type="AGRICOLA" id="IND43734003"/>
    </citation>
    <scope>PROTEIN SEQUENCE</scope>
    <scope>ACETYLATION AT MET-1</scope>
</reference>
<protein>
    <recommendedName>
        <fullName>Nucleoprotein</fullName>
    </recommendedName>
    <alternativeName>
        <fullName>Coat protein</fullName>
        <shortName>CP</shortName>
    </alternativeName>
    <alternativeName>
        <fullName>Nucleocapsid protein</fullName>
        <shortName>Protein N</shortName>
    </alternativeName>
    <alternativeName>
        <fullName>Protein pc3</fullName>
    </alternativeName>
</protein>
<dbReference type="GO" id="GO:0019029">
    <property type="term" value="C:helical viral capsid"/>
    <property type="evidence" value="ECO:0007669"/>
    <property type="project" value="UniProtKB-KW"/>
</dbReference>
<dbReference type="GO" id="GO:0030430">
    <property type="term" value="C:host cell cytoplasm"/>
    <property type="evidence" value="ECO:0007669"/>
    <property type="project" value="UniProtKB-SubCell"/>
</dbReference>
<dbReference type="GO" id="GO:0019013">
    <property type="term" value="C:viral nucleocapsid"/>
    <property type="evidence" value="ECO:0007669"/>
    <property type="project" value="UniProtKB-KW"/>
</dbReference>
<dbReference type="GO" id="GO:0003723">
    <property type="term" value="F:RNA binding"/>
    <property type="evidence" value="ECO:0007669"/>
    <property type="project" value="UniProtKB-KW"/>
</dbReference>
<dbReference type="InterPro" id="IPR009522">
    <property type="entry name" value="Capsid_Phlebovir/Tenuivir"/>
</dbReference>
<dbReference type="InterPro" id="IPR008864">
    <property type="entry name" value="Nucleocapsid_Tenuivirus"/>
</dbReference>
<dbReference type="Pfam" id="PF05733">
    <property type="entry name" value="Tenui_N"/>
    <property type="match status" value="1"/>
</dbReference>
<dbReference type="PIRSF" id="PIRSF004108">
    <property type="entry name" value="Tenuivirus_N"/>
    <property type="match status" value="1"/>
</dbReference>
<proteinExistence type="evidence at protein level"/>
<keyword id="KW-0007">Acetylation</keyword>
<keyword id="KW-0167">Capsid protein</keyword>
<keyword id="KW-0903">Direct protein sequencing</keyword>
<keyword id="KW-1139">Helical capsid protein</keyword>
<keyword id="KW-1035">Host cytoplasm</keyword>
<keyword id="KW-0694">RNA-binding</keyword>
<keyword id="KW-0543">Viral nucleoprotein</keyword>
<keyword id="KW-0946">Virion</keyword>
<organism>
    <name type="scientific">Wheat yellow head virus</name>
    <name type="common">WYHV</name>
    <dbReference type="NCBI Taxonomy" id="299385"/>
    <lineage>
        <taxon>Viruses</taxon>
        <taxon>Riboviria</taxon>
        <taxon>Orthornavirae</taxon>
        <taxon>Negarnaviricota</taxon>
        <taxon>Polyploviricotina</taxon>
        <taxon>Ellioviricetes</taxon>
        <taxon>Bunyavirales</taxon>
        <taxon>Phenuiviridae</taxon>
        <taxon>Tenuivirus</taxon>
    </lineage>
</organism>
<comment type="function">
    <text evidence="1">Encapsidates the genome, protecting it from nucleases. The encapsidated genomic RNA is termed the nucleocapsid (NC), and serves as template for viral transcription and replication (By similarity).</text>
</comment>
<comment type="subcellular location">
    <subcellularLocation>
        <location>Virion</location>
    </subcellularLocation>
    <subcellularLocation>
        <location evidence="1">Host cytoplasm</location>
    </subcellularLocation>
</comment>
<comment type="domain">
    <text evidence="2">The N-terminus is involved in homooligomerization.</text>
</comment>
<comment type="similarity">
    <text evidence="4">Belongs to the tenuiviruses nucleocapsid protein family.</text>
</comment>
<comment type="caution">
    <text evidence="4">This protein is few amino acids shorter in its N-terminus than to all other tenuiviruses. It has been described as N-acetylated unlike all other negative stranded virus nucleoproteins. Since no genome sequence is available for this virus, the N-acetylmethionine may be an artifact of protein sequencing.</text>
</comment>
<feature type="chain" id="PRO_0000222523" description="Nucleoprotein">
    <location>
        <begin position="1"/>
        <end position="314"/>
    </location>
</feature>
<feature type="binding site" evidence="2">
    <location>
        <position position="38"/>
    </location>
    <ligand>
        <name>RNA</name>
        <dbReference type="ChEBI" id="CHEBI:33697"/>
    </ligand>
</feature>
<feature type="binding site" evidence="2">
    <location>
        <position position="41"/>
    </location>
    <ligand>
        <name>RNA</name>
        <dbReference type="ChEBI" id="CHEBI:33697"/>
    </ligand>
</feature>
<feature type="binding site" evidence="2">
    <location>
        <position position="118"/>
    </location>
    <ligand>
        <name>RNA</name>
        <dbReference type="ChEBI" id="CHEBI:33697"/>
    </ligand>
</feature>
<feature type="binding site" evidence="2">
    <location>
        <position position="237"/>
    </location>
    <ligand>
        <name>RNA</name>
        <dbReference type="ChEBI" id="CHEBI:33697"/>
    </ligand>
</feature>
<feature type="binding site" evidence="2">
    <location>
        <position position="266"/>
    </location>
    <ligand>
        <name>RNA</name>
        <dbReference type="ChEBI" id="CHEBI:33697"/>
    </ligand>
</feature>
<feature type="modified residue" description="N-acetylmethionine; by host" evidence="3">
    <location>
        <position position="1"/>
    </location>
</feature>
<gene>
    <name type="ORF">pc3</name>
</gene>
<evidence type="ECO:0000250" key="1"/>
<evidence type="ECO:0000250" key="2">
    <source>
        <dbReference type="UniProtKB" id="P21701"/>
    </source>
</evidence>
<evidence type="ECO:0000255" key="3"/>
<evidence type="ECO:0000305" key="4"/>
<sequence length="314" mass="35046">MTSMVEIQNEIERVTALAVKYISENKDSLVVFVGQIDYNGYDAGKLLSILKEKAKGRDFGRDLCYLLVMRYTRGTGFVRDVRKKIKVAAGADTAYEIVTHYGVVQSVGDNADAITLGRLAALFPYVSMNIVKSVSTGAKLALDTSDLGTSGLDILLWDFVPQFINLDSVDAPYCNKKNTSNILFSLHLLQGALTTRKTMPDQKKKKDNLTTDFDLLKYTAELLVITCSAKNLTDNKKSTYRKKLVEPFRENEDYKADFWTALGKLSTGCLKKMKKDAQNYLKDRTTVLKLMVDNCSGTDDEAAKAIKDYLTVDD</sequence>
<organismHost>
    <name type="scientific">Triticum aestivum</name>
    <name type="common">Wheat</name>
    <dbReference type="NCBI Taxonomy" id="4565"/>
</organismHost>
<name>NCAP_WYHV</name>
<accession>P84254</accession>